<protein>
    <recommendedName>
        <fullName>Protein Wnt-5a</fullName>
    </recommendedName>
</protein>
<proteinExistence type="evidence at transcript level"/>
<keyword id="KW-0891">Chondrogenesis</keyword>
<keyword id="KW-0217">Developmental protein</keyword>
<keyword id="KW-0221">Differentiation</keyword>
<keyword id="KW-1015">Disulfide bond</keyword>
<keyword id="KW-0272">Extracellular matrix</keyword>
<keyword id="KW-0325">Glycoprotein</keyword>
<keyword id="KW-0449">Lipoprotein</keyword>
<keyword id="KW-1185">Reference proteome</keyword>
<keyword id="KW-0964">Secreted</keyword>
<keyword id="KW-0732">Signal</keyword>
<keyword id="KW-0879">Wnt signaling pathway</keyword>
<accession>Q9QXQ7</accession>
<accession>Q5PY99</accession>
<feature type="signal peptide" evidence="8">
    <location>
        <begin position="1"/>
        <end position="37"/>
    </location>
</feature>
<feature type="propeptide" id="PRO_0000352798" evidence="1">
    <location>
        <begin position="38"/>
        <end position="61"/>
    </location>
</feature>
<feature type="chain" id="PRO_0000041429" description="Protein Wnt-5a">
    <location>
        <begin position="62"/>
        <end position="380"/>
    </location>
</feature>
<feature type="lipid moiety-binding region" description="O-palmitoleoyl serine; by PORCN" evidence="6">
    <location>
        <position position="244"/>
    </location>
</feature>
<feature type="glycosylation site" description="N-linked (GlcNAc...) asparagine" evidence="8">
    <location>
        <position position="114"/>
    </location>
</feature>
<feature type="glycosylation site" description="N-linked (GlcNAc...) asparagine" evidence="8">
    <location>
        <position position="120"/>
    </location>
</feature>
<feature type="glycosylation site" description="N-linked (GlcNAc...) asparagine" evidence="8">
    <location>
        <position position="312"/>
    </location>
</feature>
<feature type="glycosylation site" description="N-linked (GlcNAc...) asparagine" evidence="8">
    <location>
        <position position="326"/>
    </location>
</feature>
<feature type="disulfide bond" evidence="4">
    <location>
        <begin position="104"/>
        <end position="115"/>
    </location>
</feature>
<feature type="disulfide bond" evidence="4">
    <location>
        <begin position="154"/>
        <end position="162"/>
    </location>
</feature>
<feature type="disulfide bond" evidence="4">
    <location>
        <begin position="164"/>
        <end position="182"/>
    </location>
</feature>
<feature type="disulfide bond" evidence="4">
    <location>
        <begin position="238"/>
        <end position="252"/>
    </location>
</feature>
<feature type="disulfide bond" evidence="4">
    <location>
        <begin position="240"/>
        <end position="247"/>
    </location>
</feature>
<feature type="disulfide bond" evidence="4">
    <location>
        <begin position="309"/>
        <end position="340"/>
    </location>
</feature>
<feature type="disulfide bond" evidence="4">
    <location>
        <begin position="325"/>
        <end position="335"/>
    </location>
</feature>
<feature type="disulfide bond" evidence="4">
    <location>
        <begin position="339"/>
        <end position="379"/>
    </location>
</feature>
<feature type="disulfide bond" evidence="4">
    <location>
        <begin position="355"/>
        <end position="370"/>
    </location>
</feature>
<feature type="disulfide bond" evidence="4">
    <location>
        <begin position="357"/>
        <end position="367"/>
    </location>
</feature>
<feature type="disulfide bond" evidence="4">
    <location>
        <begin position="362"/>
        <end position="363"/>
    </location>
</feature>
<feature type="sequence conflict" description="In Ref. 2; AAF15588." evidence="9" ref="2">
    <original>E</original>
    <variation>K</variation>
    <location>
        <position position="42"/>
    </location>
</feature>
<feature type="sequence conflict" description="In Ref. 2; AAF15588." evidence="9" ref="2">
    <original>G</original>
    <variation>S</variation>
    <location>
        <position position="50"/>
    </location>
</feature>
<feature type="sequence conflict" description="In Ref. 2; AAF15588." evidence="9" ref="2">
    <original>H</original>
    <variation>Y</variation>
    <location>
        <position position="61"/>
    </location>
</feature>
<feature type="sequence conflict" description="In Ref. 2; AAF15588." evidence="9" ref="2">
    <location>
        <position position="168"/>
    </location>
</feature>
<evidence type="ECO:0000250" key="1"/>
<evidence type="ECO:0000250" key="2">
    <source>
        <dbReference type="UniProtKB" id="P22725"/>
    </source>
</evidence>
<evidence type="ECO:0000250" key="3">
    <source>
        <dbReference type="UniProtKB" id="P27467"/>
    </source>
</evidence>
<evidence type="ECO:0000250" key="4">
    <source>
        <dbReference type="UniProtKB" id="P28026"/>
    </source>
</evidence>
<evidence type="ECO:0000250" key="5">
    <source>
        <dbReference type="UniProtKB" id="P41221"/>
    </source>
</evidence>
<evidence type="ECO:0000250" key="6">
    <source>
        <dbReference type="UniProtKB" id="P56704"/>
    </source>
</evidence>
<evidence type="ECO:0000250" key="7">
    <source>
        <dbReference type="UniProtKB" id="Q27Q52"/>
    </source>
</evidence>
<evidence type="ECO:0000255" key="8"/>
<evidence type="ECO:0000305" key="9"/>
<sequence>MKKPIGILSPGVALGTAGGAMSSKFFLMALATFFSFAQVVIEANSWWSLGMNNPVQMSEVHIIGAQPLCSQLAGLSQGQKKLCHLYQDHMQYIGEGAKTGIKECQYQFRHRRWNCSTVDNTSVFGRVMQIGSRETAFTYAVSAAGVVNAMSRACREGELSTCGCSRAARPKDLPRDWLWGGCGDNIDYGYRFAKEFVDARERERIHAKGSYESARILMNLHNNEAGRRTVYNLADVACKCHGVSGSCSLKTCWLQLADFRKVGDALKEKYDSAAAMRLNSRGKLVQVNSRFNSPTTQDLVYIDPSPDYCVRNESTGSLGTQGRLCNKTSEGMDGCELMCCGRGYDQFKTVQTERCHCKFHWCCYVKCKKCTEIVDQFVCK</sequence>
<reference key="1">
    <citation type="journal article" date="2004" name="Exp. Brain Res.">
        <title>Wnt-5a expression in the rat neuronal progenitor cell line ST14A.</title>
        <authorList>
            <person name="Peters S."/>
            <person name="Mix E."/>
            <person name="Bauer P."/>
            <person name="Weinelt S."/>
            <person name="Schubert B."/>
            <person name="Knoblich R."/>
            <person name="Boettcher T."/>
            <person name="Strauss U."/>
            <person name="Pahnke J."/>
            <person name="Cattaneo E."/>
            <person name="Wree A."/>
            <person name="Rolfs A."/>
        </authorList>
    </citation>
    <scope>NUCLEOTIDE SEQUENCE [MRNA]</scope>
    <source>
        <strain>Sprague-Dawley</strain>
    </source>
</reference>
<reference key="2">
    <citation type="submission" date="1999-09" db="EMBL/GenBank/DDBJ databases">
        <title>Coexpression of Wnt-5a, Wnt-4, frizzled-4, and DDC4 (frpAP, a secreted Frizzled, AF012891) in the pregnant ovary.</title>
        <authorList>
            <person name="Lacher M.D."/>
            <person name="Walther P.R."/>
            <person name="Lareu R.R."/>
            <person name="Dharmarajan A.M."/>
            <person name="Friis R.R."/>
        </authorList>
    </citation>
    <scope>NUCLEOTIDE SEQUENCE [MRNA]</scope>
    <source>
        <strain>Sprague-Dawley</strain>
        <tissue>Corpus luteum</tissue>
    </source>
</reference>
<gene>
    <name type="primary">Wnt5a</name>
    <name type="synonym">Wnt-5a</name>
</gene>
<organism>
    <name type="scientific">Rattus norvegicus</name>
    <name type="common">Rat</name>
    <dbReference type="NCBI Taxonomy" id="10116"/>
    <lineage>
        <taxon>Eukaryota</taxon>
        <taxon>Metazoa</taxon>
        <taxon>Chordata</taxon>
        <taxon>Craniata</taxon>
        <taxon>Vertebrata</taxon>
        <taxon>Euteleostomi</taxon>
        <taxon>Mammalia</taxon>
        <taxon>Eutheria</taxon>
        <taxon>Euarchontoglires</taxon>
        <taxon>Glires</taxon>
        <taxon>Rodentia</taxon>
        <taxon>Myomorpha</taxon>
        <taxon>Muroidea</taxon>
        <taxon>Muridae</taxon>
        <taxon>Murinae</taxon>
        <taxon>Rattus</taxon>
    </lineage>
</organism>
<dbReference type="EMBL" id="AY819646">
    <property type="protein sequence ID" value="AAV69750.1"/>
    <property type="molecule type" value="mRNA"/>
</dbReference>
<dbReference type="EMBL" id="AF188333">
    <property type="protein sequence ID" value="AAF15588.1"/>
    <property type="molecule type" value="mRNA"/>
</dbReference>
<dbReference type="SMR" id="Q9QXQ7"/>
<dbReference type="FunCoup" id="Q9QXQ7">
    <property type="interactions" value="476"/>
</dbReference>
<dbReference type="STRING" id="10116.ENSRNOP00000021164"/>
<dbReference type="GlyCosmos" id="Q9QXQ7">
    <property type="glycosylation" value="4 sites, No reported glycans"/>
</dbReference>
<dbReference type="GlyGen" id="Q9QXQ7">
    <property type="glycosylation" value="4 sites"/>
</dbReference>
<dbReference type="PhosphoSitePlus" id="Q9QXQ7"/>
<dbReference type="PaxDb" id="10116-ENSRNOP00000021164"/>
<dbReference type="UCSC" id="RGD:69250">
    <property type="organism name" value="rat"/>
</dbReference>
<dbReference type="AGR" id="RGD:69250"/>
<dbReference type="RGD" id="69250">
    <property type="gene designation" value="Wnt5a"/>
</dbReference>
<dbReference type="eggNOG" id="KOG3913">
    <property type="taxonomic scope" value="Eukaryota"/>
</dbReference>
<dbReference type="InParanoid" id="Q9QXQ7"/>
<dbReference type="PhylomeDB" id="Q9QXQ7"/>
<dbReference type="Reactome" id="R-RNO-201681">
    <property type="pathway name" value="TCF dependent signaling in response to WNT"/>
</dbReference>
<dbReference type="Reactome" id="R-RNO-3238698">
    <property type="pathway name" value="WNT ligand biogenesis and trafficking"/>
</dbReference>
<dbReference type="Reactome" id="R-RNO-4086398">
    <property type="pathway name" value="Ca2+ pathway"/>
</dbReference>
<dbReference type="Reactome" id="R-RNO-4086400">
    <property type="pathway name" value="PCP/CE pathway"/>
</dbReference>
<dbReference type="Reactome" id="R-RNO-4608870">
    <property type="pathway name" value="Asymmetric localization of PCP proteins"/>
</dbReference>
<dbReference type="Reactome" id="R-RNO-5099900">
    <property type="pathway name" value="WNT5A-dependent internalization of FZD4"/>
</dbReference>
<dbReference type="Reactome" id="R-RNO-5140745">
    <property type="pathway name" value="WNT5A-dependent internalization of FZD2, FZD5 and ROR2"/>
</dbReference>
<dbReference type="Reactome" id="R-RNO-8856825">
    <property type="pathway name" value="Cargo recognition for clathrin-mediated endocytosis"/>
</dbReference>
<dbReference type="Reactome" id="R-RNO-8856828">
    <property type="pathway name" value="Clathrin-mediated endocytosis"/>
</dbReference>
<dbReference type="PRO" id="PR:Q9QXQ7"/>
<dbReference type="Proteomes" id="UP000002494">
    <property type="component" value="Unplaced"/>
</dbReference>
<dbReference type="GO" id="GO:0009986">
    <property type="term" value="C:cell surface"/>
    <property type="evidence" value="ECO:0000266"/>
    <property type="project" value="RGD"/>
</dbReference>
<dbReference type="GO" id="GO:0031012">
    <property type="term" value="C:extracellular matrix"/>
    <property type="evidence" value="ECO:0000266"/>
    <property type="project" value="RGD"/>
</dbReference>
<dbReference type="GO" id="GO:0005615">
    <property type="term" value="C:extracellular space"/>
    <property type="evidence" value="ECO:0000314"/>
    <property type="project" value="RGD"/>
</dbReference>
<dbReference type="GO" id="GO:0098978">
    <property type="term" value="C:glutamatergic synapse"/>
    <property type="evidence" value="ECO:0000314"/>
    <property type="project" value="SynGO"/>
</dbReference>
<dbReference type="GO" id="GO:0098794">
    <property type="term" value="C:postsynapse"/>
    <property type="evidence" value="ECO:0007669"/>
    <property type="project" value="GOC"/>
</dbReference>
<dbReference type="GO" id="GO:0098685">
    <property type="term" value="C:Schaffer collateral - CA1 synapse"/>
    <property type="evidence" value="ECO:0000314"/>
    <property type="project" value="SynGO"/>
</dbReference>
<dbReference type="GO" id="GO:1902379">
    <property type="term" value="F:chemoattractant activity involved in axon guidance"/>
    <property type="evidence" value="ECO:0000266"/>
    <property type="project" value="RGD"/>
</dbReference>
<dbReference type="GO" id="GO:0005125">
    <property type="term" value="F:cytokine activity"/>
    <property type="evidence" value="ECO:0000266"/>
    <property type="project" value="RGD"/>
</dbReference>
<dbReference type="GO" id="GO:0005109">
    <property type="term" value="F:frizzled binding"/>
    <property type="evidence" value="ECO:0000266"/>
    <property type="project" value="RGD"/>
</dbReference>
<dbReference type="GO" id="GO:0019904">
    <property type="term" value="F:protein domain specific binding"/>
    <property type="evidence" value="ECO:0000266"/>
    <property type="project" value="RGD"/>
</dbReference>
<dbReference type="GO" id="GO:0005115">
    <property type="term" value="F:receptor tyrosine kinase-like orphan receptor binding"/>
    <property type="evidence" value="ECO:0000266"/>
    <property type="project" value="RGD"/>
</dbReference>
<dbReference type="GO" id="GO:0005102">
    <property type="term" value="F:signaling receptor binding"/>
    <property type="evidence" value="ECO:0000266"/>
    <property type="project" value="RGD"/>
</dbReference>
<dbReference type="GO" id="GO:0008595">
    <property type="term" value="P:anterior/posterior axis specification, embryo"/>
    <property type="evidence" value="ECO:0000266"/>
    <property type="project" value="RGD"/>
</dbReference>
<dbReference type="GO" id="GO:0009952">
    <property type="term" value="P:anterior/posterior pattern specification"/>
    <property type="evidence" value="ECO:0000266"/>
    <property type="project" value="RGD"/>
</dbReference>
<dbReference type="GO" id="GO:0003283">
    <property type="term" value="P:atrial septum development"/>
    <property type="evidence" value="ECO:0000266"/>
    <property type="project" value="RGD"/>
</dbReference>
<dbReference type="GO" id="GO:0003401">
    <property type="term" value="P:axis elongation"/>
    <property type="evidence" value="ECO:0000266"/>
    <property type="project" value="RGD"/>
</dbReference>
<dbReference type="GO" id="GO:0048846">
    <property type="term" value="P:axon extension involved in axon guidance"/>
    <property type="evidence" value="ECO:0000266"/>
    <property type="project" value="RGD"/>
</dbReference>
<dbReference type="GO" id="GO:0007411">
    <property type="term" value="P:axon guidance"/>
    <property type="evidence" value="ECO:0000266"/>
    <property type="project" value="RGD"/>
</dbReference>
<dbReference type="GO" id="GO:0007409">
    <property type="term" value="P:axonogenesis"/>
    <property type="evidence" value="ECO:0000266"/>
    <property type="project" value="RGD"/>
</dbReference>
<dbReference type="GO" id="GO:0030509">
    <property type="term" value="P:BMP signaling pathway"/>
    <property type="evidence" value="ECO:0000266"/>
    <property type="project" value="RGD"/>
</dbReference>
<dbReference type="GO" id="GO:0060070">
    <property type="term" value="P:canonical Wnt signaling pathway"/>
    <property type="evidence" value="ECO:0000266"/>
    <property type="project" value="RGD"/>
</dbReference>
<dbReference type="GO" id="GO:0051216">
    <property type="term" value="P:cartilage development"/>
    <property type="evidence" value="ECO:0007669"/>
    <property type="project" value="UniProtKB-KW"/>
</dbReference>
<dbReference type="GO" id="GO:0030154">
    <property type="term" value="P:cell differentiation"/>
    <property type="evidence" value="ECO:0000270"/>
    <property type="project" value="RGD"/>
</dbReference>
<dbReference type="GO" id="GO:0045165">
    <property type="term" value="P:cell fate commitment"/>
    <property type="evidence" value="ECO:0000318"/>
    <property type="project" value="GO_Central"/>
</dbReference>
<dbReference type="GO" id="GO:0016477">
    <property type="term" value="P:cell migration"/>
    <property type="evidence" value="ECO:0000266"/>
    <property type="project" value="RGD"/>
</dbReference>
<dbReference type="GO" id="GO:0008283">
    <property type="term" value="P:cell population proliferation"/>
    <property type="evidence" value="ECO:0000266"/>
    <property type="project" value="RGD"/>
</dbReference>
<dbReference type="GO" id="GO:0071277">
    <property type="term" value="P:cellular response to calcium ion"/>
    <property type="evidence" value="ECO:0000266"/>
    <property type="project" value="RGD"/>
</dbReference>
<dbReference type="GO" id="GO:0071222">
    <property type="term" value="P:cellular response to lipopolysaccharide"/>
    <property type="evidence" value="ECO:0000266"/>
    <property type="project" value="RGD"/>
</dbReference>
<dbReference type="GO" id="GO:0071219">
    <property type="term" value="P:cellular response to molecule of bacterial origin"/>
    <property type="evidence" value="ECO:0000266"/>
    <property type="project" value="RGD"/>
</dbReference>
<dbReference type="GO" id="GO:0071560">
    <property type="term" value="P:cellular response to transforming growth factor beta stimulus"/>
    <property type="evidence" value="ECO:0000266"/>
    <property type="project" value="RGD"/>
</dbReference>
<dbReference type="GO" id="GO:0071346">
    <property type="term" value="P:cellular response to type II interferon"/>
    <property type="evidence" value="ECO:0000266"/>
    <property type="project" value="RGD"/>
</dbReference>
<dbReference type="GO" id="GO:0060067">
    <property type="term" value="P:cervix development"/>
    <property type="evidence" value="ECO:0000266"/>
    <property type="project" value="RGD"/>
</dbReference>
<dbReference type="GO" id="GO:0036517">
    <property type="term" value="P:chemoattraction of serotonergic neuron axon"/>
    <property type="evidence" value="ECO:0000266"/>
    <property type="project" value="RGD"/>
</dbReference>
<dbReference type="GO" id="GO:0036518">
    <property type="term" value="P:chemorepulsion of dopaminergic neuron axon"/>
    <property type="evidence" value="ECO:0000266"/>
    <property type="project" value="RGD"/>
</dbReference>
<dbReference type="GO" id="GO:0090103">
    <property type="term" value="P:cochlea morphogenesis"/>
    <property type="evidence" value="ECO:0000266"/>
    <property type="project" value="RGD"/>
</dbReference>
<dbReference type="GO" id="GO:0060026">
    <property type="term" value="P:convergent extension"/>
    <property type="evidence" value="ECO:0000266"/>
    <property type="project" value="RGD"/>
</dbReference>
<dbReference type="GO" id="GO:0060028">
    <property type="term" value="P:convergent extension involved in axis elongation"/>
    <property type="evidence" value="ECO:0000266"/>
    <property type="project" value="RGD"/>
</dbReference>
<dbReference type="GO" id="GO:0060029">
    <property type="term" value="P:convergent extension involved in organogenesis"/>
    <property type="evidence" value="ECO:0000266"/>
    <property type="project" value="RGD"/>
</dbReference>
<dbReference type="GO" id="GO:0007368">
    <property type="term" value="P:determination of left/right symmetry"/>
    <property type="evidence" value="ECO:0000266"/>
    <property type="project" value="RGD"/>
</dbReference>
<dbReference type="GO" id="GO:0046546">
    <property type="term" value="P:development of primary male sexual characteristics"/>
    <property type="evidence" value="ECO:0000266"/>
    <property type="project" value="RGD"/>
</dbReference>
<dbReference type="GO" id="GO:0048546">
    <property type="term" value="P:digestive tract morphogenesis"/>
    <property type="evidence" value="ECO:0000266"/>
    <property type="project" value="RGD"/>
</dbReference>
<dbReference type="GO" id="GO:0071542">
    <property type="term" value="P:dopaminergic neuron differentiation"/>
    <property type="evidence" value="ECO:0000266"/>
    <property type="project" value="RGD"/>
</dbReference>
<dbReference type="GO" id="GO:0042733">
    <property type="term" value="P:embryonic digit morphogenesis"/>
    <property type="evidence" value="ECO:0000266"/>
    <property type="project" value="RGD"/>
</dbReference>
<dbReference type="GO" id="GO:0030326">
    <property type="term" value="P:embryonic limb morphogenesis"/>
    <property type="evidence" value="ECO:0000266"/>
    <property type="project" value="RGD"/>
</dbReference>
<dbReference type="GO" id="GO:0048706">
    <property type="term" value="P:embryonic skeletal system development"/>
    <property type="evidence" value="ECO:0000266"/>
    <property type="project" value="RGD"/>
</dbReference>
<dbReference type="GO" id="GO:0010631">
    <property type="term" value="P:epithelial cell migration"/>
    <property type="evidence" value="ECO:0000266"/>
    <property type="project" value="RGD"/>
</dbReference>
<dbReference type="GO" id="GO:0050673">
    <property type="term" value="P:epithelial cell proliferation"/>
    <property type="evidence" value="ECO:0000266"/>
    <property type="project" value="RGD"/>
</dbReference>
<dbReference type="GO" id="GO:0060750">
    <property type="term" value="P:epithelial cell proliferation involved in mammary gland duct elongation"/>
    <property type="evidence" value="ECO:0000266"/>
    <property type="project" value="RGD"/>
</dbReference>
<dbReference type="GO" id="GO:0001837">
    <property type="term" value="P:epithelial to mesenchymal transition"/>
    <property type="evidence" value="ECO:0000266"/>
    <property type="project" value="RGD"/>
</dbReference>
<dbReference type="GO" id="GO:0045198">
    <property type="term" value="P:establishment of epithelial cell apical/basal polarity"/>
    <property type="evidence" value="ECO:0000266"/>
    <property type="project" value="RGD"/>
</dbReference>
<dbReference type="GO" id="GO:0001736">
    <property type="term" value="P:establishment of planar polarity"/>
    <property type="evidence" value="ECO:0000266"/>
    <property type="project" value="RGD"/>
</dbReference>
<dbReference type="GO" id="GO:0044849">
    <property type="term" value="P:estrous cycle"/>
    <property type="evidence" value="ECO:0000270"/>
    <property type="project" value="RGD"/>
</dbReference>
<dbReference type="GO" id="GO:0060324">
    <property type="term" value="P:face development"/>
    <property type="evidence" value="ECO:0000266"/>
    <property type="project" value="RGD"/>
</dbReference>
<dbReference type="GO" id="GO:0008543">
    <property type="term" value="P:fibroblast growth factor receptor signaling pathway"/>
    <property type="evidence" value="ECO:0000266"/>
    <property type="project" value="RGD"/>
</dbReference>
<dbReference type="GO" id="GO:0048806">
    <property type="term" value="P:genitalia development"/>
    <property type="evidence" value="ECO:0000266"/>
    <property type="project" value="RGD"/>
</dbReference>
<dbReference type="GO" id="GO:0001947">
    <property type="term" value="P:heart looping"/>
    <property type="evidence" value="ECO:0000266"/>
    <property type="project" value="RGD"/>
</dbReference>
<dbReference type="GO" id="GO:0071425">
    <property type="term" value="P:hematopoietic stem cell proliferation"/>
    <property type="evidence" value="ECO:0000266"/>
    <property type="project" value="RGD"/>
</dbReference>
<dbReference type="GO" id="GO:0007442">
    <property type="term" value="P:hindgut morphogenesis"/>
    <property type="evidence" value="ECO:0000266"/>
    <property type="project" value="RGD"/>
</dbReference>
<dbReference type="GO" id="GO:0048850">
    <property type="term" value="P:hypophysis morphogenesis"/>
    <property type="evidence" value="ECO:0000266"/>
    <property type="project" value="RGD"/>
</dbReference>
<dbReference type="GO" id="GO:0006954">
    <property type="term" value="P:inflammatory response"/>
    <property type="evidence" value="ECO:0000266"/>
    <property type="project" value="RGD"/>
</dbReference>
<dbReference type="GO" id="GO:0042472">
    <property type="term" value="P:inner ear morphogenesis"/>
    <property type="evidence" value="ECO:0000266"/>
    <property type="project" value="RGD"/>
</dbReference>
<dbReference type="GO" id="GO:0007254">
    <property type="term" value="P:JNK cascade"/>
    <property type="evidence" value="ECO:0000266"/>
    <property type="project" value="RGD"/>
</dbReference>
<dbReference type="GO" id="GO:0030216">
    <property type="term" value="P:keratinocyte differentiation"/>
    <property type="evidence" value="ECO:0000266"/>
    <property type="project" value="RGD"/>
</dbReference>
<dbReference type="GO" id="GO:0001822">
    <property type="term" value="P:kidney development"/>
    <property type="evidence" value="ECO:0000266"/>
    <property type="project" value="RGD"/>
</dbReference>
<dbReference type="GO" id="GO:0060599">
    <property type="term" value="P:lateral sprouting involved in mammary gland duct morphogenesis"/>
    <property type="evidence" value="ECO:0000266"/>
    <property type="project" value="RGD"/>
</dbReference>
<dbReference type="GO" id="GO:0035108">
    <property type="term" value="P:limb morphogenesis"/>
    <property type="evidence" value="ECO:0000266"/>
    <property type="project" value="RGD"/>
</dbReference>
<dbReference type="GO" id="GO:0048286">
    <property type="term" value="P:lung alveolus development"/>
    <property type="evidence" value="ECO:0000270"/>
    <property type="project" value="RGD"/>
</dbReference>
<dbReference type="GO" id="GO:0030324">
    <property type="term" value="P:lung development"/>
    <property type="evidence" value="ECO:0000266"/>
    <property type="project" value="RGD"/>
</dbReference>
<dbReference type="GO" id="GO:0010742">
    <property type="term" value="P:macrophage derived foam cell differentiation"/>
    <property type="evidence" value="ECO:0000266"/>
    <property type="project" value="RGD"/>
</dbReference>
<dbReference type="GO" id="GO:0008584">
    <property type="term" value="P:male gonad development"/>
    <property type="evidence" value="ECO:0000266"/>
    <property type="project" value="RGD"/>
</dbReference>
<dbReference type="GO" id="GO:0060744">
    <property type="term" value="P:mammary gland branching involved in thelarche"/>
    <property type="evidence" value="ECO:0000266"/>
    <property type="project" value="RGD"/>
</dbReference>
<dbReference type="GO" id="GO:0140013">
    <property type="term" value="P:meiotic nuclear division"/>
    <property type="evidence" value="ECO:0000266"/>
    <property type="project" value="RGD"/>
</dbReference>
<dbReference type="GO" id="GO:0097325">
    <property type="term" value="P:melanocyte proliferation"/>
    <property type="evidence" value="ECO:0000266"/>
    <property type="project" value="RGD"/>
</dbReference>
<dbReference type="GO" id="GO:0010463">
    <property type="term" value="P:mesenchymal cell proliferation"/>
    <property type="evidence" value="ECO:0000266"/>
    <property type="project" value="RGD"/>
</dbReference>
<dbReference type="GO" id="GO:0060638">
    <property type="term" value="P:mesenchymal-epithelial cell signaling"/>
    <property type="evidence" value="ECO:0000266"/>
    <property type="project" value="RGD"/>
</dbReference>
<dbReference type="GO" id="GO:0060809">
    <property type="term" value="P:mesodermal to mesenchymal transition involved in gastrulation"/>
    <property type="evidence" value="ECO:0000266"/>
    <property type="project" value="RGD"/>
</dbReference>
<dbReference type="GO" id="GO:0030901">
    <property type="term" value="P:midbrain development"/>
    <property type="evidence" value="ECO:0000266"/>
    <property type="project" value="RGD"/>
</dbReference>
<dbReference type="GO" id="GO:1904948">
    <property type="term" value="P:midbrain dopaminergic neuron differentiation"/>
    <property type="evidence" value="ECO:0000266"/>
    <property type="project" value="RGD"/>
</dbReference>
<dbReference type="GO" id="GO:0007494">
    <property type="term" value="P:midgut development"/>
    <property type="evidence" value="ECO:0000266"/>
    <property type="project" value="RGD"/>
</dbReference>
<dbReference type="GO" id="GO:0050804">
    <property type="term" value="P:modulation of chemical synaptic transmission"/>
    <property type="evidence" value="ECO:0000314"/>
    <property type="project" value="SynGO"/>
</dbReference>
<dbReference type="GO" id="GO:0002009">
    <property type="term" value="P:morphogenesis of an epithelium"/>
    <property type="evidence" value="ECO:0000266"/>
    <property type="project" value="RGD"/>
</dbReference>
<dbReference type="GO" id="GO:0050919">
    <property type="term" value="P:negative chemotaxis"/>
    <property type="evidence" value="ECO:0000266"/>
    <property type="project" value="RGD"/>
</dbReference>
<dbReference type="GO" id="GO:0043066">
    <property type="term" value="P:negative regulation of apoptotic process"/>
    <property type="evidence" value="ECO:0000266"/>
    <property type="project" value="RGD"/>
</dbReference>
<dbReference type="GO" id="GO:0048843">
    <property type="term" value="P:negative regulation of axon extension involved in axon guidance"/>
    <property type="evidence" value="ECO:0000266"/>
    <property type="project" value="RGD"/>
</dbReference>
<dbReference type="GO" id="GO:0030514">
    <property type="term" value="P:negative regulation of BMP signaling pathway"/>
    <property type="evidence" value="ECO:0000266"/>
    <property type="project" value="RGD"/>
</dbReference>
<dbReference type="GO" id="GO:0090090">
    <property type="term" value="P:negative regulation of canonical Wnt signaling pathway"/>
    <property type="evidence" value="ECO:0000266"/>
    <property type="project" value="RGD"/>
</dbReference>
<dbReference type="GO" id="GO:1904934">
    <property type="term" value="P:negative regulation of cell proliferation in midbrain"/>
    <property type="evidence" value="ECO:0000266"/>
    <property type="project" value="RGD"/>
</dbReference>
<dbReference type="GO" id="GO:0045892">
    <property type="term" value="P:negative regulation of DNA-templated transcription"/>
    <property type="evidence" value="ECO:0000266"/>
    <property type="project" value="RGD"/>
</dbReference>
<dbReference type="GO" id="GO:0050680">
    <property type="term" value="P:negative regulation of epithelial cell proliferation"/>
    <property type="evidence" value="ECO:0000266"/>
    <property type="project" value="RGD"/>
</dbReference>
<dbReference type="GO" id="GO:0045599">
    <property type="term" value="P:negative regulation of fat cell differentiation"/>
    <property type="evidence" value="ECO:0000266"/>
    <property type="project" value="RGD"/>
</dbReference>
<dbReference type="GO" id="GO:0040037">
    <property type="term" value="P:negative regulation of fibroblast growth factor receptor signaling pathway"/>
    <property type="evidence" value="ECO:0000266"/>
    <property type="project" value="RGD"/>
</dbReference>
<dbReference type="GO" id="GO:0048022">
    <property type="term" value="P:negative regulation of melanin biosynthetic process"/>
    <property type="evidence" value="ECO:0000266"/>
    <property type="project" value="RGD"/>
</dbReference>
<dbReference type="GO" id="GO:0072201">
    <property type="term" value="P:negative regulation of mesenchymal cell proliferation"/>
    <property type="evidence" value="ECO:0000266"/>
    <property type="project" value="RGD"/>
</dbReference>
<dbReference type="GO" id="GO:0060686">
    <property type="term" value="P:negative regulation of prostatic bud formation"/>
    <property type="evidence" value="ECO:0000266"/>
    <property type="project" value="RGD"/>
</dbReference>
<dbReference type="GO" id="GO:0051964">
    <property type="term" value="P:negative regulation of synapse assembly"/>
    <property type="evidence" value="ECO:0000266"/>
    <property type="project" value="RGD"/>
</dbReference>
<dbReference type="GO" id="GO:0001843">
    <property type="term" value="P:neural tube closure"/>
    <property type="evidence" value="ECO:0000266"/>
    <property type="project" value="RGD"/>
</dbReference>
<dbReference type="GO" id="GO:0021915">
    <property type="term" value="P:neural tube development"/>
    <property type="evidence" value="ECO:0000266"/>
    <property type="project" value="RGD"/>
</dbReference>
<dbReference type="GO" id="GO:0022008">
    <property type="term" value="P:neurogenesis"/>
    <property type="evidence" value="ECO:0000266"/>
    <property type="project" value="RGD"/>
</dbReference>
<dbReference type="GO" id="GO:0030182">
    <property type="term" value="P:neuron differentiation"/>
    <property type="evidence" value="ECO:0000270"/>
    <property type="project" value="RGD"/>
</dbReference>
<dbReference type="GO" id="GO:0048812">
    <property type="term" value="P:neuron projection morphogenesis"/>
    <property type="evidence" value="ECO:0000266"/>
    <property type="project" value="RGD"/>
</dbReference>
<dbReference type="GO" id="GO:0035567">
    <property type="term" value="P:non-canonical Wnt signaling pathway"/>
    <property type="evidence" value="ECO:0000266"/>
    <property type="project" value="RGD"/>
</dbReference>
<dbReference type="GO" id="GO:0048570">
    <property type="term" value="P:notochord morphogenesis"/>
    <property type="evidence" value="ECO:0000266"/>
    <property type="project" value="RGD"/>
</dbReference>
<dbReference type="GO" id="GO:0021891">
    <property type="term" value="P:olfactory bulb interneuron development"/>
    <property type="evidence" value="ECO:0000266"/>
    <property type="project" value="RGD"/>
</dbReference>
<dbReference type="GO" id="GO:0048341">
    <property type="term" value="P:paraxial mesoderm formation"/>
    <property type="evidence" value="ECO:0000266"/>
    <property type="project" value="RGD"/>
</dbReference>
<dbReference type="GO" id="GO:0003344">
    <property type="term" value="P:pericardium morphogenesis"/>
    <property type="evidence" value="ECO:0000266"/>
    <property type="project" value="RGD"/>
</dbReference>
<dbReference type="GO" id="GO:0007200">
    <property type="term" value="P:phospholipase C-activating G protein-coupled receptor signaling pathway"/>
    <property type="evidence" value="ECO:0000266"/>
    <property type="project" value="RGD"/>
</dbReference>
<dbReference type="GO" id="GO:0045766">
    <property type="term" value="P:positive regulation of angiogenesis"/>
    <property type="evidence" value="ECO:0000266"/>
    <property type="project" value="RGD"/>
</dbReference>
<dbReference type="GO" id="GO:2001235">
    <property type="term" value="P:positive regulation of apoptotic signaling pathway"/>
    <property type="evidence" value="ECO:0000266"/>
    <property type="project" value="RGD"/>
</dbReference>
<dbReference type="GO" id="GO:0061036">
    <property type="term" value="P:positive regulation of cartilage development"/>
    <property type="evidence" value="ECO:0000266"/>
    <property type="project" value="RGD"/>
</dbReference>
<dbReference type="GO" id="GO:0022409">
    <property type="term" value="P:positive regulation of cell-cell adhesion"/>
    <property type="evidence" value="ECO:0000315"/>
    <property type="project" value="RGD"/>
</dbReference>
<dbReference type="GO" id="GO:2000049">
    <property type="term" value="P:positive regulation of cell-cell adhesion mediated by cadherin"/>
    <property type="evidence" value="ECO:0000266"/>
    <property type="project" value="RGD"/>
</dbReference>
<dbReference type="GO" id="GO:0032722">
    <property type="term" value="P:positive regulation of chemokine production"/>
    <property type="evidence" value="ECO:0000266"/>
    <property type="project" value="RGD"/>
</dbReference>
<dbReference type="GO" id="GO:0001819">
    <property type="term" value="P:positive regulation of cytokine production"/>
    <property type="evidence" value="ECO:0000266"/>
    <property type="project" value="RGD"/>
</dbReference>
<dbReference type="GO" id="GO:0002720">
    <property type="term" value="P:positive regulation of cytokine production involved in immune response"/>
    <property type="evidence" value="ECO:0000266"/>
    <property type="project" value="RGD"/>
</dbReference>
<dbReference type="GO" id="GO:1903861">
    <property type="term" value="P:positive regulation of dendrite extension"/>
    <property type="evidence" value="ECO:0000315"/>
    <property type="project" value="RGD"/>
</dbReference>
<dbReference type="GO" id="GO:0050775">
    <property type="term" value="P:positive regulation of dendrite morphogenesis"/>
    <property type="evidence" value="ECO:0000315"/>
    <property type="project" value="RGD"/>
</dbReference>
<dbReference type="GO" id="GO:0045893">
    <property type="term" value="P:positive regulation of DNA-templated transcription"/>
    <property type="evidence" value="ECO:0000266"/>
    <property type="project" value="RGD"/>
</dbReference>
<dbReference type="GO" id="GO:0045807">
    <property type="term" value="P:positive regulation of endocytosis"/>
    <property type="evidence" value="ECO:0000266"/>
    <property type="project" value="RGD"/>
</dbReference>
<dbReference type="GO" id="GO:0010595">
    <property type="term" value="P:positive regulation of endothelial cell migration"/>
    <property type="evidence" value="ECO:0000266"/>
    <property type="project" value="RGD"/>
</dbReference>
<dbReference type="GO" id="GO:0001938">
    <property type="term" value="P:positive regulation of endothelial cell proliferation"/>
    <property type="evidence" value="ECO:0000266"/>
    <property type="project" value="RGD"/>
</dbReference>
<dbReference type="GO" id="GO:0050679">
    <property type="term" value="P:positive regulation of epithelial cell proliferation"/>
    <property type="evidence" value="ECO:0000266"/>
    <property type="project" value="RGD"/>
</dbReference>
<dbReference type="GO" id="GO:0048146">
    <property type="term" value="P:positive regulation of fibroblast proliferation"/>
    <property type="evidence" value="ECO:0000266"/>
    <property type="project" value="RGD"/>
</dbReference>
<dbReference type="GO" id="GO:0010628">
    <property type="term" value="P:positive regulation of gene expression"/>
    <property type="evidence" value="ECO:0000266"/>
    <property type="project" value="RGD"/>
</dbReference>
<dbReference type="GO" id="GO:1902035">
    <property type="term" value="P:positive regulation of hematopoietic stem cell proliferation"/>
    <property type="evidence" value="ECO:0000266"/>
    <property type="project" value="RGD"/>
</dbReference>
<dbReference type="GO" id="GO:0050729">
    <property type="term" value="P:positive regulation of inflammatory response"/>
    <property type="evidence" value="ECO:0000266"/>
    <property type="project" value="RGD"/>
</dbReference>
<dbReference type="GO" id="GO:0032731">
    <property type="term" value="P:positive regulation of interleukin-1 beta production"/>
    <property type="evidence" value="ECO:0000266"/>
    <property type="project" value="RGD"/>
</dbReference>
<dbReference type="GO" id="GO:0032755">
    <property type="term" value="P:positive regulation of interleukin-6 production"/>
    <property type="evidence" value="ECO:0000266"/>
    <property type="project" value="RGD"/>
</dbReference>
<dbReference type="GO" id="GO:0032757">
    <property type="term" value="P:positive regulation of interleukin-8 production"/>
    <property type="evidence" value="ECO:0000266"/>
    <property type="project" value="RGD"/>
</dbReference>
<dbReference type="GO" id="GO:0046330">
    <property type="term" value="P:positive regulation of JNK cascade"/>
    <property type="evidence" value="ECO:0000266"/>
    <property type="project" value="RGD"/>
</dbReference>
<dbReference type="GO" id="GO:0043032">
    <property type="term" value="P:positive regulation of macrophage activation"/>
    <property type="evidence" value="ECO:0000266"/>
    <property type="project" value="RGD"/>
</dbReference>
<dbReference type="GO" id="GO:0060907">
    <property type="term" value="P:positive regulation of macrophage cytokine production"/>
    <property type="evidence" value="ECO:0000266"/>
    <property type="project" value="RGD"/>
</dbReference>
<dbReference type="GO" id="GO:0043410">
    <property type="term" value="P:positive regulation of MAPK cascade"/>
    <property type="evidence" value="ECO:0000266"/>
    <property type="project" value="RGD"/>
</dbReference>
<dbReference type="GO" id="GO:0045836">
    <property type="term" value="P:positive regulation of meiotic nuclear division"/>
    <property type="evidence" value="ECO:0000266"/>
    <property type="project" value="RGD"/>
</dbReference>
<dbReference type="GO" id="GO:0002053">
    <property type="term" value="P:positive regulation of mesenchymal cell proliferation"/>
    <property type="evidence" value="ECO:0000266"/>
    <property type="project" value="RGD"/>
</dbReference>
<dbReference type="GO" id="GO:0150012">
    <property type="term" value="P:positive regulation of neuron projection arborization"/>
    <property type="evidence" value="ECO:0000316"/>
    <property type="project" value="ARUK-UCL"/>
</dbReference>
<dbReference type="GO" id="GO:0010976">
    <property type="term" value="P:positive regulation of neuron projection development"/>
    <property type="evidence" value="ECO:0000266"/>
    <property type="project" value="RGD"/>
</dbReference>
<dbReference type="GO" id="GO:2000052">
    <property type="term" value="P:positive regulation of non-canonical Wnt signaling pathway"/>
    <property type="evidence" value="ECO:0000266"/>
    <property type="project" value="RGD"/>
</dbReference>
<dbReference type="GO" id="GO:0045778">
    <property type="term" value="P:positive regulation of ossification"/>
    <property type="evidence" value="ECO:0000266"/>
    <property type="project" value="RGD"/>
</dbReference>
<dbReference type="GO" id="GO:0045732">
    <property type="term" value="P:positive regulation of protein catabolic process"/>
    <property type="evidence" value="ECO:0000266"/>
    <property type="project" value="RGD"/>
</dbReference>
<dbReference type="GO" id="GO:0060760">
    <property type="term" value="P:positive regulation of response to cytokine stimulus"/>
    <property type="evidence" value="ECO:0000266"/>
    <property type="project" value="RGD"/>
</dbReference>
<dbReference type="GO" id="GO:2000648">
    <property type="term" value="P:positive regulation of stem cell proliferation"/>
    <property type="evidence" value="ECO:0000266"/>
    <property type="project" value="RGD"/>
</dbReference>
<dbReference type="GO" id="GO:0010820">
    <property type="term" value="P:positive regulation of T cell chemotaxis"/>
    <property type="evidence" value="ECO:0000266"/>
    <property type="project" value="RGD"/>
</dbReference>
<dbReference type="GO" id="GO:0070245">
    <property type="term" value="P:positive regulation of thymocyte apoptotic process"/>
    <property type="evidence" value="ECO:0000266"/>
    <property type="project" value="RGD"/>
</dbReference>
<dbReference type="GO" id="GO:0051885">
    <property type="term" value="P:positive regulation of timing of anagen"/>
    <property type="evidence" value="ECO:0000266"/>
    <property type="project" value="RGD"/>
</dbReference>
<dbReference type="GO" id="GO:0045944">
    <property type="term" value="P:positive regulation of transcription by RNA polymerase II"/>
    <property type="evidence" value="ECO:0000266"/>
    <property type="project" value="RGD"/>
</dbReference>
<dbReference type="GO" id="GO:0032760">
    <property type="term" value="P:positive regulation of tumor necrosis factor production"/>
    <property type="evidence" value="ECO:0000266"/>
    <property type="project" value="RGD"/>
</dbReference>
<dbReference type="GO" id="GO:0060340">
    <property type="term" value="P:positive regulation of type I interferon-mediated signaling pathway"/>
    <property type="evidence" value="ECO:0000266"/>
    <property type="project" value="RGD"/>
</dbReference>
<dbReference type="GO" id="GO:0032729">
    <property type="term" value="P:positive regulation of type II interferon production"/>
    <property type="evidence" value="ECO:0000266"/>
    <property type="project" value="RGD"/>
</dbReference>
<dbReference type="GO" id="GO:0036342">
    <property type="term" value="P:post-anal tail morphogenesis"/>
    <property type="evidence" value="ECO:0000266"/>
    <property type="project" value="RGD"/>
</dbReference>
<dbReference type="GO" id="GO:0099170">
    <property type="term" value="P:postsynaptic modulation of chemical synaptic transmission"/>
    <property type="evidence" value="ECO:0000266"/>
    <property type="project" value="RGD"/>
</dbReference>
<dbReference type="GO" id="GO:0003138">
    <property type="term" value="P:primary heart field specification"/>
    <property type="evidence" value="ECO:0000266"/>
    <property type="project" value="RGD"/>
</dbReference>
<dbReference type="GO" id="GO:0090009">
    <property type="term" value="P:primitive streak formation"/>
    <property type="evidence" value="ECO:0000266"/>
    <property type="project" value="RGD"/>
</dbReference>
<dbReference type="GO" id="GO:0030850">
    <property type="term" value="P:prostate gland development"/>
    <property type="evidence" value="ECO:0000270"/>
    <property type="project" value="RGD"/>
</dbReference>
<dbReference type="GO" id="GO:0008104">
    <property type="term" value="P:protein localization"/>
    <property type="evidence" value="ECO:0000266"/>
    <property type="project" value="RGD"/>
</dbReference>
<dbReference type="GO" id="GO:0060762">
    <property type="term" value="P:regulation of branching involved in mammary gland duct morphogenesis"/>
    <property type="evidence" value="ECO:0000266"/>
    <property type="project" value="RGD"/>
</dbReference>
<dbReference type="GO" id="GO:0043122">
    <property type="term" value="P:regulation of canonical NF-kappaB signal transduction"/>
    <property type="evidence" value="ECO:0000266"/>
    <property type="project" value="RGD"/>
</dbReference>
<dbReference type="GO" id="GO:0099175">
    <property type="term" value="P:regulation of postsynapse organization"/>
    <property type="evidence" value="ECO:0000266"/>
    <property type="project" value="RGD"/>
</dbReference>
<dbReference type="GO" id="GO:0099566">
    <property type="term" value="P:regulation of postsynaptic cytosolic calcium ion concentration"/>
    <property type="evidence" value="ECO:0000266"/>
    <property type="project" value="RGD"/>
</dbReference>
<dbReference type="GO" id="GO:0099150">
    <property type="term" value="P:regulation of postsynaptic specialization assembly"/>
    <property type="evidence" value="ECO:0000314"/>
    <property type="project" value="SynGO"/>
</dbReference>
<dbReference type="GO" id="GO:0032880">
    <property type="term" value="P:regulation of protein localization"/>
    <property type="evidence" value="ECO:0000266"/>
    <property type="project" value="RGD"/>
</dbReference>
<dbReference type="GO" id="GO:0050807">
    <property type="term" value="P:regulation of synapse organization"/>
    <property type="evidence" value="ECO:0000266"/>
    <property type="project" value="RGD"/>
</dbReference>
<dbReference type="GO" id="GO:0150045">
    <property type="term" value="P:regulation of synaptic signaling by nitric oxide"/>
    <property type="evidence" value="ECO:0000314"/>
    <property type="project" value="SynGO"/>
</dbReference>
<dbReference type="GO" id="GO:0032355">
    <property type="term" value="P:response to estradiol"/>
    <property type="evidence" value="ECO:0000270"/>
    <property type="project" value="RGD"/>
</dbReference>
<dbReference type="GO" id="GO:0051384">
    <property type="term" value="P:response to glucocorticoid"/>
    <property type="evidence" value="ECO:0000270"/>
    <property type="project" value="RGD"/>
</dbReference>
<dbReference type="GO" id="GO:0055093">
    <property type="term" value="P:response to hyperoxia"/>
    <property type="evidence" value="ECO:0000270"/>
    <property type="project" value="RGD"/>
</dbReference>
<dbReference type="GO" id="GO:1905235">
    <property type="term" value="P:response to quercetin"/>
    <property type="evidence" value="ECO:0000270"/>
    <property type="project" value="RGD"/>
</dbReference>
<dbReference type="GO" id="GO:0033574">
    <property type="term" value="P:response to testosterone"/>
    <property type="evidence" value="ECO:0000270"/>
    <property type="project" value="RGD"/>
</dbReference>
<dbReference type="GO" id="GO:0003139">
    <property type="term" value="P:secondary heart field specification"/>
    <property type="evidence" value="ECO:0000266"/>
    <property type="project" value="RGD"/>
</dbReference>
<dbReference type="GO" id="GO:0062009">
    <property type="term" value="P:secondary palate development"/>
    <property type="evidence" value="ECO:0000266"/>
    <property type="project" value="RGD"/>
</dbReference>
<dbReference type="GO" id="GO:0061053">
    <property type="term" value="P:somite development"/>
    <property type="evidence" value="ECO:0000266"/>
    <property type="project" value="RGD"/>
</dbReference>
<dbReference type="GO" id="GO:0001756">
    <property type="term" value="P:somitogenesis"/>
    <property type="evidence" value="ECO:0000266"/>
    <property type="project" value="RGD"/>
</dbReference>
<dbReference type="GO" id="GO:0072089">
    <property type="term" value="P:stem cell proliferation"/>
    <property type="evidence" value="ECO:0000266"/>
    <property type="project" value="RGD"/>
</dbReference>
<dbReference type="GO" id="GO:0070242">
    <property type="term" value="P:thymocyte apoptotic process"/>
    <property type="evidence" value="ECO:0000266"/>
    <property type="project" value="RGD"/>
</dbReference>
<dbReference type="GO" id="GO:0060606">
    <property type="term" value="P:tube closure"/>
    <property type="evidence" value="ECO:0000266"/>
    <property type="project" value="RGD"/>
</dbReference>
<dbReference type="GO" id="GO:0003323">
    <property type="term" value="P:type B pancreatic cell development"/>
    <property type="evidence" value="ECO:0000266"/>
    <property type="project" value="RGD"/>
</dbReference>
<dbReference type="GO" id="GO:0060157">
    <property type="term" value="P:urinary bladder development"/>
    <property type="evidence" value="ECO:0000266"/>
    <property type="project" value="RGD"/>
</dbReference>
<dbReference type="GO" id="GO:0060065">
    <property type="term" value="P:uterus development"/>
    <property type="evidence" value="ECO:0000266"/>
    <property type="project" value="RGD"/>
</dbReference>
<dbReference type="GO" id="GO:0060068">
    <property type="term" value="P:vagina development"/>
    <property type="evidence" value="ECO:0000266"/>
    <property type="project" value="RGD"/>
</dbReference>
<dbReference type="GO" id="GO:0003281">
    <property type="term" value="P:ventricular septum development"/>
    <property type="evidence" value="ECO:0000266"/>
    <property type="project" value="RGD"/>
</dbReference>
<dbReference type="GO" id="GO:0016055">
    <property type="term" value="P:Wnt signaling pathway"/>
    <property type="evidence" value="ECO:0000266"/>
    <property type="project" value="RGD"/>
</dbReference>
<dbReference type="GO" id="GO:0007223">
    <property type="term" value="P:Wnt signaling pathway, calcium modulating pathway"/>
    <property type="evidence" value="ECO:0000266"/>
    <property type="project" value="RGD"/>
</dbReference>
<dbReference type="GO" id="GO:0060071">
    <property type="term" value="P:Wnt signaling pathway, planar cell polarity pathway"/>
    <property type="evidence" value="ECO:0000314"/>
    <property type="project" value="MGI"/>
</dbReference>
<dbReference type="GO" id="GO:0042060">
    <property type="term" value="P:wound healing"/>
    <property type="evidence" value="ECO:0000266"/>
    <property type="project" value="RGD"/>
</dbReference>
<dbReference type="CDD" id="cd19347">
    <property type="entry name" value="Wnt_Wnt5a"/>
    <property type="match status" value="1"/>
</dbReference>
<dbReference type="FunFam" id="3.30.2460.20:FF:000001">
    <property type="entry name" value="Wnt homolog"/>
    <property type="match status" value="1"/>
</dbReference>
<dbReference type="Gene3D" id="3.30.2460.20">
    <property type="match status" value="1"/>
</dbReference>
<dbReference type="InterPro" id="IPR005817">
    <property type="entry name" value="Wnt"/>
</dbReference>
<dbReference type="InterPro" id="IPR043158">
    <property type="entry name" value="Wnt_C"/>
</dbReference>
<dbReference type="InterPro" id="IPR018161">
    <property type="entry name" value="Wnt_CS"/>
</dbReference>
<dbReference type="PANTHER" id="PTHR12027:SF33">
    <property type="entry name" value="PROTEIN WNT-5A"/>
    <property type="match status" value="1"/>
</dbReference>
<dbReference type="PANTHER" id="PTHR12027">
    <property type="entry name" value="WNT RELATED"/>
    <property type="match status" value="1"/>
</dbReference>
<dbReference type="Pfam" id="PF00110">
    <property type="entry name" value="wnt"/>
    <property type="match status" value="1"/>
</dbReference>
<dbReference type="PRINTS" id="PR01349">
    <property type="entry name" value="WNTPROTEIN"/>
</dbReference>
<dbReference type="SMART" id="SM00097">
    <property type="entry name" value="WNT1"/>
    <property type="match status" value="1"/>
</dbReference>
<dbReference type="PROSITE" id="PS00246">
    <property type="entry name" value="WNT1"/>
    <property type="match status" value="1"/>
</dbReference>
<comment type="function">
    <text evidence="2 5 7">Ligand for members of the frizzled family of seven transmembrane receptors. Can activate or inhibit canonical Wnt signaling, depending on receptor context. In the presence of FZD4, activates beta-catenin signaling. In the presence of ROR2, inhibits the canonical Wnt pathway by promoting beta-catenin degradation through a GSK3-independent pathway which involves down-regulation of beta-catenin-induced reporter gene expression (By similarity). Suppression of the canonical pathway allows chondrogenesis to occur and inhibits tumor formation. Stimulates cell migration. Decreases proliferation, migration, invasiveness and clonogenicity of carcinoma cells and may act as a tumor suppressor. Mediates motility of melanoma cells (By similarity). Required during embryogenesis for extension of the primary anterior-posterior axis and for outgrowth of limbs and the genital tubercle. Inhibits type II collagen expression in chondrocytes (By similarity).</text>
</comment>
<comment type="subunit">
    <text evidence="2 5">Forms a soluble 1:1 complex with AFM; this prevents oligomerization and is required for prolonged biological activity. The complex with AFM may represent the physiological form in body fluids (By similarity). Homooligomer; disulfide-linked, leading to inactivation (in vitro). Interacts with PORCN. Interacts with WLS (By similarity). Interacts with glypican GCP3 (By similarity). Interacts with PKD1 (via extracellular domain) (By similarity). Interacts with TMEM67 (By similarity).</text>
</comment>
<comment type="subcellular location">
    <subcellularLocation>
        <location evidence="5">Secreted</location>
        <location evidence="5">Extracellular space</location>
        <location evidence="5">Extracellular matrix</location>
    </subcellularLocation>
    <subcellularLocation>
        <location evidence="5">Secreted</location>
    </subcellularLocation>
</comment>
<comment type="PTM">
    <text evidence="2">Glycosylation is necessary for secretion but not for activity.</text>
</comment>
<comment type="PTM">
    <text evidence="3 6">Palmitoleoylation is required for efficient binding to frizzled receptors. Depalmitoleoylation leads to Wnt signaling pathway inhibition.</text>
</comment>
<comment type="PTM">
    <text evidence="2">Proteolytic processing by TIKI1 and TIKI2 promotes oxidation and formation of large disulfide-bond oligomers, leading to inactivation of WNT5A.</text>
</comment>
<comment type="similarity">
    <text evidence="9">Belongs to the Wnt family.</text>
</comment>
<name>WNT5A_RAT</name>